<feature type="chain" id="PRO_1000049938" description="Gamma-glutamyl phosphate reductase">
    <location>
        <begin position="1"/>
        <end position="429"/>
    </location>
</feature>
<name>PROA_BRASO</name>
<sequence length="429" mass="45095">MTAPLKAIDGSADLPQLMNDLAKRARAAARVLALAPAEQKNRALEAMERRIRARADVIIAANAEDVAEAKAVGVTPSFVDRLTLTPARVAAMADGIAVVRGVADPVGVVTESWQRPNGMTIERVRVPLGVIGVIFESRPNVAADAGVLCLKSGNAVILRGGSDSFRSCRAIHECLVEGLREAGLPDTAITLVPTRDRAAVGLLLSGLNGGVDVIVPRGGKSLVARVEAEARVPVFAHLEGVNHVYVDGAADLDMAKSIVLNAKMRRTGVCGAAETLLIDRASQDKIKPLVDMLIGAGCEVRGDEAVRAADARVTPANNEDWDTEYLDAIIAAKVVDGVDGAIAHIHAHGSHHTDAIVTQDNKVADKFLNEVDSAIVLHNASTQFADGGEFGFGAEIGIATGKFHARGPVGVEQLTSFKYRIHGTGQTRP</sequence>
<reference key="1">
    <citation type="journal article" date="2007" name="Science">
        <title>Legumes symbioses: absence of nod genes in photosynthetic bradyrhizobia.</title>
        <authorList>
            <person name="Giraud E."/>
            <person name="Moulin L."/>
            <person name="Vallenet D."/>
            <person name="Barbe V."/>
            <person name="Cytryn E."/>
            <person name="Avarre J.-C."/>
            <person name="Jaubert M."/>
            <person name="Simon D."/>
            <person name="Cartieaux F."/>
            <person name="Prin Y."/>
            <person name="Bena G."/>
            <person name="Hannibal L."/>
            <person name="Fardoux J."/>
            <person name="Kojadinovic M."/>
            <person name="Vuillet L."/>
            <person name="Lajus A."/>
            <person name="Cruveiller S."/>
            <person name="Rouy Z."/>
            <person name="Mangenot S."/>
            <person name="Segurens B."/>
            <person name="Dossat C."/>
            <person name="Franck W.L."/>
            <person name="Chang W.-S."/>
            <person name="Saunders E."/>
            <person name="Bruce D."/>
            <person name="Richardson P."/>
            <person name="Normand P."/>
            <person name="Dreyfus B."/>
            <person name="Pignol D."/>
            <person name="Stacey G."/>
            <person name="Emerich D."/>
            <person name="Vermeglio A."/>
            <person name="Medigue C."/>
            <person name="Sadowsky M."/>
        </authorList>
    </citation>
    <scope>NUCLEOTIDE SEQUENCE [LARGE SCALE GENOMIC DNA]</scope>
    <source>
        <strain>ORS 278</strain>
    </source>
</reference>
<protein>
    <recommendedName>
        <fullName evidence="1">Gamma-glutamyl phosphate reductase</fullName>
        <shortName evidence="1">GPR</shortName>
        <ecNumber evidence="1">1.2.1.41</ecNumber>
    </recommendedName>
    <alternativeName>
        <fullName evidence="1">Glutamate-5-semialdehyde dehydrogenase</fullName>
    </alternativeName>
    <alternativeName>
        <fullName evidence="1">Glutamyl-gamma-semialdehyde dehydrogenase</fullName>
        <shortName evidence="1">GSA dehydrogenase</shortName>
    </alternativeName>
</protein>
<accession>A4YKF1</accession>
<comment type="function">
    <text evidence="1">Catalyzes the NADPH-dependent reduction of L-glutamate 5-phosphate into L-glutamate 5-semialdehyde and phosphate. The product spontaneously undergoes cyclization to form 1-pyrroline-5-carboxylate.</text>
</comment>
<comment type="catalytic activity">
    <reaction evidence="1">
        <text>L-glutamate 5-semialdehyde + phosphate + NADP(+) = L-glutamyl 5-phosphate + NADPH + H(+)</text>
        <dbReference type="Rhea" id="RHEA:19541"/>
        <dbReference type="ChEBI" id="CHEBI:15378"/>
        <dbReference type="ChEBI" id="CHEBI:43474"/>
        <dbReference type="ChEBI" id="CHEBI:57783"/>
        <dbReference type="ChEBI" id="CHEBI:58066"/>
        <dbReference type="ChEBI" id="CHEBI:58274"/>
        <dbReference type="ChEBI" id="CHEBI:58349"/>
        <dbReference type="EC" id="1.2.1.41"/>
    </reaction>
</comment>
<comment type="pathway">
    <text evidence="1">Amino-acid biosynthesis; L-proline biosynthesis; L-glutamate 5-semialdehyde from L-glutamate: step 2/2.</text>
</comment>
<comment type="subcellular location">
    <subcellularLocation>
        <location evidence="1">Cytoplasm</location>
    </subcellularLocation>
</comment>
<comment type="similarity">
    <text evidence="1">Belongs to the gamma-glutamyl phosphate reductase family.</text>
</comment>
<keyword id="KW-0028">Amino-acid biosynthesis</keyword>
<keyword id="KW-0963">Cytoplasm</keyword>
<keyword id="KW-0521">NADP</keyword>
<keyword id="KW-0560">Oxidoreductase</keyword>
<keyword id="KW-0641">Proline biosynthesis</keyword>
<keyword id="KW-1185">Reference proteome</keyword>
<proteinExistence type="inferred from homology"/>
<organism>
    <name type="scientific">Bradyrhizobium sp. (strain ORS 278)</name>
    <dbReference type="NCBI Taxonomy" id="114615"/>
    <lineage>
        <taxon>Bacteria</taxon>
        <taxon>Pseudomonadati</taxon>
        <taxon>Pseudomonadota</taxon>
        <taxon>Alphaproteobacteria</taxon>
        <taxon>Hyphomicrobiales</taxon>
        <taxon>Nitrobacteraceae</taxon>
        <taxon>Bradyrhizobium</taxon>
    </lineage>
</organism>
<evidence type="ECO:0000255" key="1">
    <source>
        <dbReference type="HAMAP-Rule" id="MF_00412"/>
    </source>
</evidence>
<gene>
    <name evidence="1" type="primary">proA</name>
    <name type="ordered locus">BRADO0430</name>
</gene>
<dbReference type="EC" id="1.2.1.41" evidence="1"/>
<dbReference type="EMBL" id="CU234118">
    <property type="protein sequence ID" value="CAL74377.1"/>
    <property type="molecule type" value="Genomic_DNA"/>
</dbReference>
<dbReference type="RefSeq" id="WP_011923653.1">
    <property type="nucleotide sequence ID" value="NC_009445.1"/>
</dbReference>
<dbReference type="SMR" id="A4YKF1"/>
<dbReference type="STRING" id="114615.BRADO0430"/>
<dbReference type="KEGG" id="bra:BRADO0430"/>
<dbReference type="eggNOG" id="COG0014">
    <property type="taxonomic scope" value="Bacteria"/>
</dbReference>
<dbReference type="HOGENOM" id="CLU_030231_0_0_5"/>
<dbReference type="OrthoDB" id="9809970at2"/>
<dbReference type="UniPathway" id="UPA00098">
    <property type="reaction ID" value="UER00360"/>
</dbReference>
<dbReference type="Proteomes" id="UP000001994">
    <property type="component" value="Chromosome"/>
</dbReference>
<dbReference type="GO" id="GO:0005737">
    <property type="term" value="C:cytoplasm"/>
    <property type="evidence" value="ECO:0007669"/>
    <property type="project" value="UniProtKB-SubCell"/>
</dbReference>
<dbReference type="GO" id="GO:0004350">
    <property type="term" value="F:glutamate-5-semialdehyde dehydrogenase activity"/>
    <property type="evidence" value="ECO:0007669"/>
    <property type="project" value="UniProtKB-UniRule"/>
</dbReference>
<dbReference type="GO" id="GO:0050661">
    <property type="term" value="F:NADP binding"/>
    <property type="evidence" value="ECO:0007669"/>
    <property type="project" value="InterPro"/>
</dbReference>
<dbReference type="GO" id="GO:0055129">
    <property type="term" value="P:L-proline biosynthetic process"/>
    <property type="evidence" value="ECO:0007669"/>
    <property type="project" value="UniProtKB-UniRule"/>
</dbReference>
<dbReference type="CDD" id="cd07079">
    <property type="entry name" value="ALDH_F18-19_ProA-GPR"/>
    <property type="match status" value="1"/>
</dbReference>
<dbReference type="FunFam" id="3.40.309.10:FF:000006">
    <property type="entry name" value="Gamma-glutamyl phosphate reductase"/>
    <property type="match status" value="1"/>
</dbReference>
<dbReference type="Gene3D" id="3.40.605.10">
    <property type="entry name" value="Aldehyde Dehydrogenase, Chain A, domain 1"/>
    <property type="match status" value="1"/>
</dbReference>
<dbReference type="Gene3D" id="3.40.309.10">
    <property type="entry name" value="Aldehyde Dehydrogenase, Chain A, domain 2"/>
    <property type="match status" value="1"/>
</dbReference>
<dbReference type="HAMAP" id="MF_00412">
    <property type="entry name" value="ProA"/>
    <property type="match status" value="1"/>
</dbReference>
<dbReference type="InterPro" id="IPR016161">
    <property type="entry name" value="Ald_DH/histidinol_DH"/>
</dbReference>
<dbReference type="InterPro" id="IPR016163">
    <property type="entry name" value="Ald_DH_C"/>
</dbReference>
<dbReference type="InterPro" id="IPR016162">
    <property type="entry name" value="Ald_DH_N"/>
</dbReference>
<dbReference type="InterPro" id="IPR015590">
    <property type="entry name" value="Aldehyde_DH_dom"/>
</dbReference>
<dbReference type="InterPro" id="IPR020593">
    <property type="entry name" value="G-glutamylP_reductase_CS"/>
</dbReference>
<dbReference type="InterPro" id="IPR012134">
    <property type="entry name" value="Glu-5-SA_DH"/>
</dbReference>
<dbReference type="InterPro" id="IPR000965">
    <property type="entry name" value="GPR_dom"/>
</dbReference>
<dbReference type="NCBIfam" id="NF001221">
    <property type="entry name" value="PRK00197.1"/>
    <property type="match status" value="1"/>
</dbReference>
<dbReference type="NCBIfam" id="TIGR00407">
    <property type="entry name" value="proA"/>
    <property type="match status" value="1"/>
</dbReference>
<dbReference type="PANTHER" id="PTHR11063:SF8">
    <property type="entry name" value="DELTA-1-PYRROLINE-5-CARBOXYLATE SYNTHASE"/>
    <property type="match status" value="1"/>
</dbReference>
<dbReference type="PANTHER" id="PTHR11063">
    <property type="entry name" value="GLUTAMATE SEMIALDEHYDE DEHYDROGENASE"/>
    <property type="match status" value="1"/>
</dbReference>
<dbReference type="Pfam" id="PF00171">
    <property type="entry name" value="Aldedh"/>
    <property type="match status" value="1"/>
</dbReference>
<dbReference type="PIRSF" id="PIRSF000151">
    <property type="entry name" value="GPR"/>
    <property type="match status" value="1"/>
</dbReference>
<dbReference type="SUPFAM" id="SSF53720">
    <property type="entry name" value="ALDH-like"/>
    <property type="match status" value="1"/>
</dbReference>
<dbReference type="PROSITE" id="PS01223">
    <property type="entry name" value="PROA"/>
    <property type="match status" value="1"/>
</dbReference>